<gene>
    <name evidence="1" type="primary">MT-ND3</name>
    <name type="synonym">MTND3</name>
    <name type="synonym">NADH3</name>
    <name type="synonym">ND3</name>
</gene>
<keyword id="KW-0249">Electron transport</keyword>
<keyword id="KW-0472">Membrane</keyword>
<keyword id="KW-0496">Mitochondrion</keyword>
<keyword id="KW-0999">Mitochondrion inner membrane</keyword>
<keyword id="KW-0520">NAD</keyword>
<keyword id="KW-0679">Respiratory chain</keyword>
<keyword id="KW-1278">Translocase</keyword>
<keyword id="KW-0812">Transmembrane</keyword>
<keyword id="KW-1133">Transmembrane helix</keyword>
<keyword id="KW-0813">Transport</keyword>
<keyword id="KW-0830">Ubiquinone</keyword>
<comment type="function">
    <text evidence="1">Core subunit of the mitochondrial membrane respiratory chain NADH dehydrogenase (Complex I) which catalyzes electron transfer from NADH through the respiratory chain, using ubiquinone as an electron acceptor. Essential for the catalytic activity of complex I.</text>
</comment>
<comment type="catalytic activity">
    <reaction evidence="1">
        <text>a ubiquinone + NADH + 5 H(+)(in) = a ubiquinol + NAD(+) + 4 H(+)(out)</text>
        <dbReference type="Rhea" id="RHEA:29091"/>
        <dbReference type="Rhea" id="RHEA-COMP:9565"/>
        <dbReference type="Rhea" id="RHEA-COMP:9566"/>
        <dbReference type="ChEBI" id="CHEBI:15378"/>
        <dbReference type="ChEBI" id="CHEBI:16389"/>
        <dbReference type="ChEBI" id="CHEBI:17976"/>
        <dbReference type="ChEBI" id="CHEBI:57540"/>
        <dbReference type="ChEBI" id="CHEBI:57945"/>
        <dbReference type="EC" id="7.1.1.2"/>
    </reaction>
</comment>
<comment type="subunit">
    <text evidence="1">Core subunit of respiratory chain NADH dehydrogenase (Complex I) which is composed of 45 different subunits. Interacts with TMEM186. Interacts with TMEM242 (By similarity).</text>
</comment>
<comment type="subcellular location">
    <subcellularLocation>
        <location evidence="2">Mitochondrion inner membrane</location>
        <topology evidence="3">Multi-pass membrane protein</topology>
    </subcellularLocation>
</comment>
<comment type="similarity">
    <text evidence="4">Belongs to the complex I subunit 3 family.</text>
</comment>
<evidence type="ECO:0000250" key="1">
    <source>
        <dbReference type="UniProtKB" id="P03897"/>
    </source>
</evidence>
<evidence type="ECO:0000250" key="2">
    <source>
        <dbReference type="UniProtKB" id="P03898"/>
    </source>
</evidence>
<evidence type="ECO:0000255" key="3"/>
<evidence type="ECO:0000305" key="4"/>
<accession>O03202</accession>
<protein>
    <recommendedName>
        <fullName evidence="1">NADH-ubiquinone oxidoreductase chain 3</fullName>
        <ecNumber evidence="1">7.1.1.2</ecNumber>
    </recommendedName>
    <alternativeName>
        <fullName>NADH dehydrogenase subunit 3</fullName>
    </alternativeName>
</protein>
<reference key="1">
    <citation type="journal article" date="1997" name="Mol. Phylogenet. Evol.">
        <title>The complete mitochondrial DNA sequence of the white rhinoceros, Ceratotherium simum, and comparison with the mtDNA sequence of the Indian rhinoceros, Rhinoceros unicornis.</title>
        <authorList>
            <person name="Xu X."/>
            <person name="Arnason U."/>
        </authorList>
    </citation>
    <scope>NUCLEOTIDE SEQUENCE [GENOMIC DNA]</scope>
</reference>
<sequence>MNLMLTLFINTSLASVLVLIAFWLPQLNIYTEKASPYECGFDPMGSARLPFTMKFFLVAITFLLFDLEIALLLPLPWASQTTNLKTMLTMALILISLLAASLAYEWTQKGLEWAE</sequence>
<dbReference type="EC" id="7.1.1.2" evidence="1"/>
<dbReference type="EMBL" id="Y07726">
    <property type="protein sequence ID" value="CAA69013.1"/>
    <property type="molecule type" value="Genomic_DNA"/>
</dbReference>
<dbReference type="RefSeq" id="NP_007440.1">
    <property type="nucleotide sequence ID" value="NC_001808.1"/>
</dbReference>
<dbReference type="SMR" id="O03202"/>
<dbReference type="GeneID" id="808104"/>
<dbReference type="CTD" id="4537"/>
<dbReference type="OMA" id="GPRRYNR"/>
<dbReference type="GO" id="GO:0005743">
    <property type="term" value="C:mitochondrial inner membrane"/>
    <property type="evidence" value="ECO:0000250"/>
    <property type="project" value="UniProtKB"/>
</dbReference>
<dbReference type="GO" id="GO:0030964">
    <property type="term" value="C:NADH dehydrogenase complex"/>
    <property type="evidence" value="ECO:0007669"/>
    <property type="project" value="TreeGrafter"/>
</dbReference>
<dbReference type="GO" id="GO:0008137">
    <property type="term" value="F:NADH dehydrogenase (ubiquinone) activity"/>
    <property type="evidence" value="ECO:0000250"/>
    <property type="project" value="UniProtKB"/>
</dbReference>
<dbReference type="GO" id="GO:0006120">
    <property type="term" value="P:mitochondrial electron transport, NADH to ubiquinone"/>
    <property type="evidence" value="ECO:0000250"/>
    <property type="project" value="UniProtKB"/>
</dbReference>
<dbReference type="FunFam" id="1.20.58.1610:FF:000004">
    <property type="entry name" value="NADH-quinone oxidoreductase subunit A"/>
    <property type="match status" value="1"/>
</dbReference>
<dbReference type="Gene3D" id="1.20.58.1610">
    <property type="entry name" value="NADH:ubiquinone/plastoquinone oxidoreductase, chain 3"/>
    <property type="match status" value="1"/>
</dbReference>
<dbReference type="InterPro" id="IPR000440">
    <property type="entry name" value="NADH_UbQ/plastoQ_OxRdtase_su3"/>
</dbReference>
<dbReference type="InterPro" id="IPR038430">
    <property type="entry name" value="NDAH_ubi_oxred_su3_sf"/>
</dbReference>
<dbReference type="PANTHER" id="PTHR11058">
    <property type="entry name" value="NADH-UBIQUINONE OXIDOREDUCTASE CHAIN 3"/>
    <property type="match status" value="1"/>
</dbReference>
<dbReference type="PANTHER" id="PTHR11058:SF9">
    <property type="entry name" value="NADH-UBIQUINONE OXIDOREDUCTASE CHAIN 3"/>
    <property type="match status" value="1"/>
</dbReference>
<dbReference type="Pfam" id="PF00507">
    <property type="entry name" value="Oxidored_q4"/>
    <property type="match status" value="1"/>
</dbReference>
<organism>
    <name type="scientific">Ceratotherium simum</name>
    <name type="common">White rhinoceros</name>
    <name type="synonym">Square-lipped rhinoceros</name>
    <dbReference type="NCBI Taxonomy" id="9807"/>
    <lineage>
        <taxon>Eukaryota</taxon>
        <taxon>Metazoa</taxon>
        <taxon>Chordata</taxon>
        <taxon>Craniata</taxon>
        <taxon>Vertebrata</taxon>
        <taxon>Euteleostomi</taxon>
        <taxon>Mammalia</taxon>
        <taxon>Eutheria</taxon>
        <taxon>Laurasiatheria</taxon>
        <taxon>Perissodactyla</taxon>
        <taxon>Rhinocerotidae</taxon>
        <taxon>Ceratotherium</taxon>
    </lineage>
</organism>
<geneLocation type="mitochondrion"/>
<name>NU3M_CERSI</name>
<proteinExistence type="inferred from homology"/>
<feature type="chain" id="PRO_0000117726" description="NADH-ubiquinone oxidoreductase chain 3">
    <location>
        <begin position="1"/>
        <end position="115"/>
    </location>
</feature>
<feature type="transmembrane region" description="Helical" evidence="3">
    <location>
        <begin position="3"/>
        <end position="23"/>
    </location>
</feature>
<feature type="transmembrane region" description="Helical" evidence="3">
    <location>
        <begin position="55"/>
        <end position="75"/>
    </location>
</feature>
<feature type="transmembrane region" description="Helical" evidence="3">
    <location>
        <begin position="86"/>
        <end position="106"/>
    </location>
</feature>